<feature type="chain" id="PRO_0000277606" description="Inactive ADP-ribosyltransferase ARH2">
    <location>
        <begin position="1"/>
        <end position="354"/>
    </location>
</feature>
<feature type="modified residue" description="Phosphoserine" evidence="2">
    <location>
        <position position="27"/>
    </location>
</feature>
<feature type="splice variant" id="VSP_023036" description="In isoform 2." evidence="3">
    <location>
        <begin position="1"/>
        <end position="82"/>
    </location>
</feature>
<feature type="sequence variant" id="VAR_048890" description="In dbSNP:rs9577273.">
    <original>A</original>
    <variation>V</variation>
    <location>
        <position position="7"/>
    </location>
</feature>
<reference key="1">
    <citation type="journal article" date="2002" name="Protein Sci.">
        <title>The family of toxin-related ecto-ADP-ribosyltransferases in humans and the mouse.</title>
        <authorList>
            <person name="Glowacki G."/>
            <person name="Braren R."/>
            <person name="Firner K."/>
            <person name="Nissen M."/>
            <person name="Kuehl M."/>
            <person name="Reche P."/>
            <person name="Bazan J.F."/>
            <person name="Cetkovic-Cvrlje M."/>
            <person name="Leiter E."/>
            <person name="Haag F."/>
            <person name="Koch-Nolte F."/>
        </authorList>
    </citation>
    <scope>NUCLEOTIDE SEQUENCE [MRNA] (ISOFORM 1)</scope>
</reference>
<reference key="2">
    <citation type="journal article" date="2004" name="Nature">
        <title>The DNA sequence and analysis of human chromosome 13.</title>
        <authorList>
            <person name="Dunham A."/>
            <person name="Matthews L.H."/>
            <person name="Burton J."/>
            <person name="Ashurst J.L."/>
            <person name="Howe K.L."/>
            <person name="Ashcroft K.J."/>
            <person name="Beare D.M."/>
            <person name="Burford D.C."/>
            <person name="Hunt S.E."/>
            <person name="Griffiths-Jones S."/>
            <person name="Jones M.C."/>
            <person name="Keenan S.J."/>
            <person name="Oliver K."/>
            <person name="Scott C.E."/>
            <person name="Ainscough R."/>
            <person name="Almeida J.P."/>
            <person name="Ambrose K.D."/>
            <person name="Andrews D.T."/>
            <person name="Ashwell R.I.S."/>
            <person name="Babbage A.K."/>
            <person name="Bagguley C.L."/>
            <person name="Bailey J."/>
            <person name="Bannerjee R."/>
            <person name="Barlow K.F."/>
            <person name="Bates K."/>
            <person name="Beasley H."/>
            <person name="Bird C.P."/>
            <person name="Bray-Allen S."/>
            <person name="Brown A.J."/>
            <person name="Brown J.Y."/>
            <person name="Burrill W."/>
            <person name="Carder C."/>
            <person name="Carter N.P."/>
            <person name="Chapman J.C."/>
            <person name="Clamp M.E."/>
            <person name="Clark S.Y."/>
            <person name="Clarke G."/>
            <person name="Clee C.M."/>
            <person name="Clegg S.C."/>
            <person name="Cobley V."/>
            <person name="Collins J.E."/>
            <person name="Corby N."/>
            <person name="Coville G.J."/>
            <person name="Deloukas P."/>
            <person name="Dhami P."/>
            <person name="Dunham I."/>
            <person name="Dunn M."/>
            <person name="Earthrowl M.E."/>
            <person name="Ellington A.G."/>
            <person name="Faulkner L."/>
            <person name="Frankish A.G."/>
            <person name="Frankland J."/>
            <person name="French L."/>
            <person name="Garner P."/>
            <person name="Garnett J."/>
            <person name="Gilbert J.G.R."/>
            <person name="Gilson C.J."/>
            <person name="Ghori J."/>
            <person name="Grafham D.V."/>
            <person name="Gribble S.M."/>
            <person name="Griffiths C."/>
            <person name="Hall R.E."/>
            <person name="Hammond S."/>
            <person name="Harley J.L."/>
            <person name="Hart E.A."/>
            <person name="Heath P.D."/>
            <person name="Howden P.J."/>
            <person name="Huckle E.J."/>
            <person name="Hunt P.J."/>
            <person name="Hunt A.R."/>
            <person name="Johnson C."/>
            <person name="Johnson D."/>
            <person name="Kay M."/>
            <person name="Kimberley A.M."/>
            <person name="King A."/>
            <person name="Laird G.K."/>
            <person name="Langford C.J."/>
            <person name="Lawlor S."/>
            <person name="Leongamornlert D.A."/>
            <person name="Lloyd D.M."/>
            <person name="Lloyd C."/>
            <person name="Loveland J.E."/>
            <person name="Lovell J."/>
            <person name="Martin S."/>
            <person name="Mashreghi-Mohammadi M."/>
            <person name="McLaren S.J."/>
            <person name="McMurray A."/>
            <person name="Milne S."/>
            <person name="Moore M.J.F."/>
            <person name="Nickerson T."/>
            <person name="Palmer S.A."/>
            <person name="Pearce A.V."/>
            <person name="Peck A.I."/>
            <person name="Pelan S."/>
            <person name="Phillimore B."/>
            <person name="Porter K.M."/>
            <person name="Rice C.M."/>
            <person name="Searle S."/>
            <person name="Sehra H.K."/>
            <person name="Shownkeen R."/>
            <person name="Skuce C.D."/>
            <person name="Smith M."/>
            <person name="Steward C.A."/>
            <person name="Sycamore N."/>
            <person name="Tester J."/>
            <person name="Thomas D.W."/>
            <person name="Tracey A."/>
            <person name="Tromans A."/>
            <person name="Tubby B."/>
            <person name="Wall M."/>
            <person name="Wallis J.M."/>
            <person name="West A.P."/>
            <person name="Whitehead S.L."/>
            <person name="Willey D.L."/>
            <person name="Wilming L."/>
            <person name="Wray P.W."/>
            <person name="Wright M.W."/>
            <person name="Young L."/>
            <person name="Coulson A."/>
            <person name="Durbin R.M."/>
            <person name="Hubbard T."/>
            <person name="Sulston J.E."/>
            <person name="Beck S."/>
            <person name="Bentley D.R."/>
            <person name="Rogers J."/>
            <person name="Ross M.T."/>
        </authorList>
    </citation>
    <scope>NUCLEOTIDE SEQUENCE [LARGE SCALE GENOMIC DNA]</scope>
</reference>
<reference key="3">
    <citation type="journal article" date="2004" name="Genome Res.">
        <title>The status, quality, and expansion of the NIH full-length cDNA project: the Mammalian Gene Collection (MGC).</title>
        <authorList>
            <consortium name="The MGC Project Team"/>
        </authorList>
    </citation>
    <scope>NUCLEOTIDE SEQUENCE [LARGE SCALE MRNA] (ISOFORM 2)</scope>
    <source>
        <tissue>Ovary</tissue>
    </source>
</reference>
<sequence>MEKFKAAMLLGSVGDALGYRNVCKENSTVGMKIQEELQRSGGLDHLVLSPGEWPVSDNTIMHIATAEALTTDYWCLDDLYREMVRCYVEIVEKLPERRPDPATIEGCAQLKPNNYLLAWHTPFNEKGSGFGAATKAMCIGLRYWKPERLETLIEVSVECGRMTHNHPTGFLGSLCTALFVSFAAQGKPLVQWGRDMLRAVPLAEEYCRKTIRHTAEYQEHWFYFEAKWQFYLEERKISKDSENKAIFPDNYDAEEREKTYRKWSSEGRGGRRGHDAPMIAYDALLAAGNSWTELCHRAMFHGGESAATGTIAGCLFGLLYGLDLVPKGLYQDLEDKEKLEDLGAALYRLSTEEK</sequence>
<keyword id="KW-0025">Alternative splicing</keyword>
<keyword id="KW-0963">Cytoplasm</keyword>
<keyword id="KW-0597">Phosphoprotein</keyword>
<keyword id="KW-1267">Proteomics identification</keyword>
<keyword id="KW-1185">Reference proteome</keyword>
<comment type="function">
    <text evidence="1 2">Required for myofibril assembly and outgrowth of the cardiac chambers in the developing heart (By similarity). Appears to be catalytically inactive, showing no activity against O-acetyl-ADP-ribose (By similarity).</text>
</comment>
<comment type="subcellular location">
    <subcellularLocation>
        <location evidence="1">Cytoplasm</location>
        <location evidence="1">Myofibril</location>
        <location evidence="1">Sarcomere</location>
    </subcellularLocation>
</comment>
<comment type="alternative products">
    <event type="alternative splicing"/>
    <isoform>
        <id>Q8NDY3-1</id>
        <name>1</name>
        <sequence type="displayed"/>
    </isoform>
    <isoform>
        <id>Q8NDY3-2</id>
        <name>2</name>
        <sequence type="described" ref="VSP_023036"/>
    </isoform>
</comment>
<comment type="similarity">
    <text evidence="4">Belongs to the ADP-ribosylglycohydrolase family.</text>
</comment>
<comment type="caution">
    <text evidence="1">Although it belongs to the ADP-ribosylglycohydrolase family, lacks the metal-binding and substrate-binding residues, suggesting that it has no hydrolase activity.</text>
</comment>
<protein>
    <recommendedName>
        <fullName evidence="4">Inactive ADP-ribosyltransferase ARH2</fullName>
    </recommendedName>
    <alternativeName>
        <fullName evidence="4">ADP-ribosylhydrolase-like protein 1</fullName>
    </alternativeName>
    <alternativeName>
        <fullName>[Protein ADP-ribosylarginine] hydrolase-like protein 1</fullName>
    </alternativeName>
</protein>
<proteinExistence type="evidence at protein level"/>
<organism>
    <name type="scientific">Homo sapiens</name>
    <name type="common">Human</name>
    <dbReference type="NCBI Taxonomy" id="9606"/>
    <lineage>
        <taxon>Eukaryota</taxon>
        <taxon>Metazoa</taxon>
        <taxon>Chordata</taxon>
        <taxon>Craniata</taxon>
        <taxon>Vertebrata</taxon>
        <taxon>Euteleostomi</taxon>
        <taxon>Mammalia</taxon>
        <taxon>Eutheria</taxon>
        <taxon>Euarchontoglires</taxon>
        <taxon>Primates</taxon>
        <taxon>Haplorrhini</taxon>
        <taxon>Catarrhini</taxon>
        <taxon>Hominidae</taxon>
        <taxon>Homo</taxon>
    </lineage>
</organism>
<dbReference type="EMBL" id="AJ313429">
    <property type="protein sequence ID" value="CAC86114.1"/>
    <property type="molecule type" value="mRNA"/>
</dbReference>
<dbReference type="EMBL" id="AL160251">
    <property type="status" value="NOT_ANNOTATED_CDS"/>
    <property type="molecule type" value="Genomic_DNA"/>
</dbReference>
<dbReference type="EMBL" id="BC009755">
    <property type="protein sequence ID" value="AAH09755.1"/>
    <property type="molecule type" value="mRNA"/>
</dbReference>
<dbReference type="CCDS" id="CCDS9535.1">
    <molecule id="Q8NDY3-1"/>
</dbReference>
<dbReference type="CCDS" id="CCDS9536.1">
    <molecule id="Q8NDY3-2"/>
</dbReference>
<dbReference type="RefSeq" id="NP_612439.2">
    <molecule id="Q8NDY3-1"/>
    <property type="nucleotide sequence ID" value="NM_138430.4"/>
</dbReference>
<dbReference type="RefSeq" id="NP_954631.1">
    <molecule id="Q8NDY3-2"/>
    <property type="nucleotide sequence ID" value="NM_199162.3"/>
</dbReference>
<dbReference type="SMR" id="Q8NDY3"/>
<dbReference type="BioGRID" id="125253">
    <property type="interactions" value="2"/>
</dbReference>
<dbReference type="FunCoup" id="Q8NDY3">
    <property type="interactions" value="19"/>
</dbReference>
<dbReference type="STRING" id="9606.ENSP00000364567"/>
<dbReference type="iPTMnet" id="Q8NDY3"/>
<dbReference type="PhosphoSitePlus" id="Q8NDY3"/>
<dbReference type="BioMuta" id="ADPRHL1"/>
<dbReference type="MassIVE" id="Q8NDY3"/>
<dbReference type="PaxDb" id="9606-ENSP00000364567"/>
<dbReference type="PeptideAtlas" id="Q8NDY3"/>
<dbReference type="ProteomicsDB" id="73089">
    <molecule id="Q8NDY3-1"/>
</dbReference>
<dbReference type="ProteomicsDB" id="73090">
    <molecule id="Q8NDY3-2"/>
</dbReference>
<dbReference type="Antibodypedia" id="25929">
    <property type="antibodies" value="62 antibodies from 18 providers"/>
</dbReference>
<dbReference type="DNASU" id="113622"/>
<dbReference type="Ensembl" id="ENST00000356501.8">
    <molecule id="Q8NDY3-2"/>
    <property type="protein sequence ID" value="ENSP00000348894.4"/>
    <property type="gene ID" value="ENSG00000153531.15"/>
</dbReference>
<dbReference type="Ensembl" id="ENST00000375418.8">
    <molecule id="Q8NDY3-1"/>
    <property type="protein sequence ID" value="ENSP00000364567.3"/>
    <property type="gene ID" value="ENSG00000153531.15"/>
</dbReference>
<dbReference type="GeneID" id="113622"/>
<dbReference type="KEGG" id="hsa:113622"/>
<dbReference type="UCSC" id="uc001vtp.2">
    <molecule id="Q8NDY3-1"/>
    <property type="organism name" value="human"/>
</dbReference>
<dbReference type="AGR" id="HGNC:21303"/>
<dbReference type="CTD" id="113622"/>
<dbReference type="DisGeNET" id="113622"/>
<dbReference type="GeneCards" id="ADPRHL1"/>
<dbReference type="HGNC" id="HGNC:21303">
    <property type="gene designation" value="ADPRHL1"/>
</dbReference>
<dbReference type="HPA" id="ENSG00000153531">
    <property type="expression patterns" value="Group enriched (heart muscle, skeletal muscle, tongue)"/>
</dbReference>
<dbReference type="MIM" id="610620">
    <property type="type" value="gene"/>
</dbReference>
<dbReference type="neXtProt" id="NX_Q8NDY3"/>
<dbReference type="OpenTargets" id="ENSG00000153531"/>
<dbReference type="PharmGKB" id="PA134870688"/>
<dbReference type="VEuPathDB" id="HostDB:ENSG00000153531"/>
<dbReference type="eggNOG" id="ENOG502QPMI">
    <property type="taxonomic scope" value="Eukaryota"/>
</dbReference>
<dbReference type="GeneTree" id="ENSGT00530000063627"/>
<dbReference type="HOGENOM" id="CLU_047061_1_0_1"/>
<dbReference type="InParanoid" id="Q8NDY3"/>
<dbReference type="OrthoDB" id="10250509at2759"/>
<dbReference type="PAN-GO" id="Q8NDY3">
    <property type="GO annotations" value="0 GO annotations based on evolutionary models"/>
</dbReference>
<dbReference type="PhylomeDB" id="Q8NDY3"/>
<dbReference type="TreeFam" id="TF329417"/>
<dbReference type="PathwayCommons" id="Q8NDY3"/>
<dbReference type="SignaLink" id="Q8NDY3"/>
<dbReference type="BioGRID-ORCS" id="113622">
    <property type="hits" value="13 hits in 1146 CRISPR screens"/>
</dbReference>
<dbReference type="ChiTaRS" id="ADPRHL1">
    <property type="organism name" value="human"/>
</dbReference>
<dbReference type="GenomeRNAi" id="113622"/>
<dbReference type="Pharos" id="Q8NDY3">
    <property type="development level" value="Tbio"/>
</dbReference>
<dbReference type="PRO" id="PR:Q8NDY3"/>
<dbReference type="Proteomes" id="UP000005640">
    <property type="component" value="Chromosome 13"/>
</dbReference>
<dbReference type="RNAct" id="Q8NDY3">
    <property type="molecule type" value="protein"/>
</dbReference>
<dbReference type="Bgee" id="ENSG00000153531">
    <property type="expression patterns" value="Expressed in left ventricle myocardium and 164 other cell types or tissues"/>
</dbReference>
<dbReference type="ExpressionAtlas" id="Q8NDY3">
    <property type="expression patterns" value="baseline and differential"/>
</dbReference>
<dbReference type="GO" id="GO:0030017">
    <property type="term" value="C:sarcomere"/>
    <property type="evidence" value="ECO:0000250"/>
    <property type="project" value="UniProtKB"/>
</dbReference>
<dbReference type="GO" id="GO:0003875">
    <property type="term" value="F:ADP-ribosylarginine hydrolase activity"/>
    <property type="evidence" value="ECO:0007669"/>
    <property type="project" value="InterPro"/>
</dbReference>
<dbReference type="GO" id="GO:0000287">
    <property type="term" value="F:magnesium ion binding"/>
    <property type="evidence" value="ECO:0007669"/>
    <property type="project" value="InterPro"/>
</dbReference>
<dbReference type="GO" id="GO:0003242">
    <property type="term" value="P:cardiac chamber ballooning"/>
    <property type="evidence" value="ECO:0000250"/>
    <property type="project" value="UniProtKB"/>
</dbReference>
<dbReference type="GO" id="GO:0055003">
    <property type="term" value="P:cardiac myofibril assembly"/>
    <property type="evidence" value="ECO:0000250"/>
    <property type="project" value="UniProtKB"/>
</dbReference>
<dbReference type="GO" id="GO:0051725">
    <property type="term" value="P:protein de-ADP-ribosylation"/>
    <property type="evidence" value="ECO:0007669"/>
    <property type="project" value="InterPro"/>
</dbReference>
<dbReference type="FunFam" id="1.10.4080.10:FF:000002">
    <property type="entry name" value="ADP-ribosylarginine hydrolase isoform X1"/>
    <property type="match status" value="1"/>
</dbReference>
<dbReference type="Gene3D" id="1.10.4080.10">
    <property type="entry name" value="ADP-ribosylation/Crystallin J1"/>
    <property type="match status" value="1"/>
</dbReference>
<dbReference type="InterPro" id="IPR012108">
    <property type="entry name" value="ADP-ribosylarg_hydro"/>
</dbReference>
<dbReference type="InterPro" id="IPR050792">
    <property type="entry name" value="ADP-ribosylglycohydrolase"/>
</dbReference>
<dbReference type="InterPro" id="IPR005502">
    <property type="entry name" value="Ribosyl_crysJ1"/>
</dbReference>
<dbReference type="InterPro" id="IPR036705">
    <property type="entry name" value="Ribosyl_crysJ1_sf"/>
</dbReference>
<dbReference type="PANTHER" id="PTHR16222">
    <property type="entry name" value="ADP-RIBOSYLGLYCOHYDROLASE"/>
    <property type="match status" value="1"/>
</dbReference>
<dbReference type="PANTHER" id="PTHR16222:SF23">
    <property type="entry name" value="INACTIVE ADP-RIBOSYLTRANSFERASE ARH2"/>
    <property type="match status" value="1"/>
</dbReference>
<dbReference type="Pfam" id="PF03747">
    <property type="entry name" value="ADP_ribosyl_GH"/>
    <property type="match status" value="1"/>
</dbReference>
<dbReference type="PIRSF" id="PIRSF016939">
    <property type="entry name" value="ADP_ribslarg_hdr"/>
    <property type="match status" value="1"/>
</dbReference>
<dbReference type="SUPFAM" id="SSF101478">
    <property type="entry name" value="ADP-ribosylglycohydrolase"/>
    <property type="match status" value="1"/>
</dbReference>
<gene>
    <name type="primary">ADPRHL1</name>
    <name type="synonym">ARH2</name>
</gene>
<evidence type="ECO:0000250" key="1">
    <source>
        <dbReference type="UniProtKB" id="Q6AZR2"/>
    </source>
</evidence>
<evidence type="ECO:0000250" key="2">
    <source>
        <dbReference type="UniProtKB" id="Q8BGK2"/>
    </source>
</evidence>
<evidence type="ECO:0000303" key="3">
    <source>
    </source>
</evidence>
<evidence type="ECO:0000305" key="4"/>
<name>ARHL1_HUMAN</name>
<accession>Q8NDY3</accession>
<accession>Q5JUG2</accession>
<accession>Q96GD1</accession>